<feature type="chain" id="PRO_0000376744" description="N-acetyldiaminopimelate deacetylase">
    <location>
        <begin position="1"/>
        <end position="376"/>
    </location>
</feature>
<feature type="active site" evidence="1">
    <location>
        <position position="69"/>
    </location>
</feature>
<feature type="active site" description="Proton acceptor" evidence="1">
    <location>
        <position position="128"/>
    </location>
</feature>
<accession>Q635U8</accession>
<proteinExistence type="inferred from homology"/>
<keyword id="KW-0028">Amino-acid biosynthesis</keyword>
<keyword id="KW-0220">Diaminopimelate biosynthesis</keyword>
<keyword id="KW-0378">Hydrolase</keyword>
<keyword id="KW-0457">Lysine biosynthesis</keyword>
<organism>
    <name type="scientific">Bacillus cereus (strain ZK / E33L)</name>
    <dbReference type="NCBI Taxonomy" id="288681"/>
    <lineage>
        <taxon>Bacteria</taxon>
        <taxon>Bacillati</taxon>
        <taxon>Bacillota</taxon>
        <taxon>Bacilli</taxon>
        <taxon>Bacillales</taxon>
        <taxon>Bacillaceae</taxon>
        <taxon>Bacillus</taxon>
        <taxon>Bacillus cereus group</taxon>
    </lineage>
</organism>
<evidence type="ECO:0000255" key="1">
    <source>
        <dbReference type="HAMAP-Rule" id="MF_01692"/>
    </source>
</evidence>
<protein>
    <recommendedName>
        <fullName evidence="1">N-acetyldiaminopimelate deacetylase</fullName>
        <ecNumber evidence="1">3.5.1.47</ecNumber>
    </recommendedName>
</protein>
<gene>
    <name type="ordered locus">BCE33L3738</name>
</gene>
<name>DAPEL_BACCZ</name>
<comment type="function">
    <text evidence="1">Catalyzes the conversion of N-acetyl-diaminopimelate to diaminopimelate and acetate.</text>
</comment>
<comment type="catalytic activity">
    <reaction evidence="1">
        <text>N-acetyl-(2S,6S)-2,6-diaminopimelate + H2O = (2S,6S)-2,6-diaminopimelate + acetate</text>
        <dbReference type="Rhea" id="RHEA:20405"/>
        <dbReference type="ChEBI" id="CHEBI:15377"/>
        <dbReference type="ChEBI" id="CHEBI:30089"/>
        <dbReference type="ChEBI" id="CHEBI:57609"/>
        <dbReference type="ChEBI" id="CHEBI:58767"/>
        <dbReference type="EC" id="3.5.1.47"/>
    </reaction>
</comment>
<comment type="pathway">
    <text evidence="1">Amino-acid biosynthesis; L-lysine biosynthesis via DAP pathway; LL-2,6-diaminopimelate from (S)-tetrahydrodipicolinate (acetylase route): step 3/3.</text>
</comment>
<comment type="similarity">
    <text evidence="1">Belongs to the peptidase M20A family. N-acetyldiaminopimelate deacetylase subfamily.</text>
</comment>
<dbReference type="EC" id="3.5.1.47" evidence="1"/>
<dbReference type="EMBL" id="CP000001">
    <property type="protein sequence ID" value="AAU16529.1"/>
    <property type="molecule type" value="Genomic_DNA"/>
</dbReference>
<dbReference type="RefSeq" id="WP_000301165.1">
    <property type="nucleotide sequence ID" value="NZ_CP009968.1"/>
</dbReference>
<dbReference type="SMR" id="Q635U8"/>
<dbReference type="MEROPS" id="M20.A27"/>
<dbReference type="KEGG" id="bcz:BCE33L3738"/>
<dbReference type="PATRIC" id="fig|288681.22.peg.1671"/>
<dbReference type="UniPathway" id="UPA00034">
    <property type="reaction ID" value="UER00024"/>
</dbReference>
<dbReference type="Proteomes" id="UP000002612">
    <property type="component" value="Chromosome"/>
</dbReference>
<dbReference type="GO" id="GO:0050118">
    <property type="term" value="F:N-acetyldiaminopimelate deacetylase activity"/>
    <property type="evidence" value="ECO:0007669"/>
    <property type="project" value="UniProtKB-UniRule"/>
</dbReference>
<dbReference type="GO" id="GO:0019877">
    <property type="term" value="P:diaminopimelate biosynthetic process"/>
    <property type="evidence" value="ECO:0007669"/>
    <property type="project" value="UniProtKB-UniRule"/>
</dbReference>
<dbReference type="GO" id="GO:0009089">
    <property type="term" value="P:lysine biosynthetic process via diaminopimelate"/>
    <property type="evidence" value="ECO:0007669"/>
    <property type="project" value="UniProtKB-UniRule"/>
</dbReference>
<dbReference type="CDD" id="cd05670">
    <property type="entry name" value="M20_Acy1_YkuR-like"/>
    <property type="match status" value="1"/>
</dbReference>
<dbReference type="FunFam" id="3.30.70.360:FF:000001">
    <property type="entry name" value="N-acetyldiaminopimelate deacetylase"/>
    <property type="match status" value="1"/>
</dbReference>
<dbReference type="Gene3D" id="3.30.70.360">
    <property type="match status" value="1"/>
</dbReference>
<dbReference type="Gene3D" id="3.40.630.10">
    <property type="entry name" value="Zn peptidases"/>
    <property type="match status" value="1"/>
</dbReference>
<dbReference type="HAMAP" id="MF_01692">
    <property type="entry name" value="DapEL"/>
    <property type="match status" value="1"/>
</dbReference>
<dbReference type="InterPro" id="IPR023905">
    <property type="entry name" value="AcetylDAP_deacetylase"/>
</dbReference>
<dbReference type="InterPro" id="IPR017439">
    <property type="entry name" value="Amidohydrolase"/>
</dbReference>
<dbReference type="InterPro" id="IPR036264">
    <property type="entry name" value="Bact_exopeptidase_dim_dom"/>
</dbReference>
<dbReference type="InterPro" id="IPR002933">
    <property type="entry name" value="Peptidase_M20"/>
</dbReference>
<dbReference type="InterPro" id="IPR011650">
    <property type="entry name" value="Peptidase_M20_dimer"/>
</dbReference>
<dbReference type="NCBIfam" id="TIGR01891">
    <property type="entry name" value="amidohydrolases"/>
    <property type="match status" value="1"/>
</dbReference>
<dbReference type="PANTHER" id="PTHR11014:SF98">
    <property type="entry name" value="N-ACETYLDIAMINOPIMELATE DEACETYLASE"/>
    <property type="match status" value="1"/>
</dbReference>
<dbReference type="PANTHER" id="PTHR11014">
    <property type="entry name" value="PEPTIDASE M20 FAMILY MEMBER"/>
    <property type="match status" value="1"/>
</dbReference>
<dbReference type="Pfam" id="PF07687">
    <property type="entry name" value="M20_dimer"/>
    <property type="match status" value="1"/>
</dbReference>
<dbReference type="Pfam" id="PF01546">
    <property type="entry name" value="Peptidase_M20"/>
    <property type="match status" value="1"/>
</dbReference>
<dbReference type="PIRSF" id="PIRSF005962">
    <property type="entry name" value="Pept_M20D_amidohydro"/>
    <property type="match status" value="1"/>
</dbReference>
<dbReference type="SUPFAM" id="SSF55031">
    <property type="entry name" value="Bacterial exopeptidase dimerisation domain"/>
    <property type="match status" value="1"/>
</dbReference>
<dbReference type="SUPFAM" id="SSF53187">
    <property type="entry name" value="Zn-dependent exopeptidases"/>
    <property type="match status" value="1"/>
</dbReference>
<sequence>MAVSKFVQIRRDLHKIPEIGFKEWKTQQYILDYIGTLSNEHVEVKVWRTGVIVKVKGKNPEKVIGYRADIDGLPITEETGYEFASVHEGMMHACGHDLHTTIGLGLLTAAVTERIDDDLVFLFQPAEEGPGGALPMLESEELKEWKPNIILGLHIAPEYPVGTIATKEGLLFANTSELYVDLKGKGGHAAYPHTANDMIVAASHLVTQLQSVISRNVNPLDSAVITIGKITGGTVQNIIAEKSRLEGTIRTLSVESMSRVKSRIEAIVAGIEASFQCEAVIDYGAMYHQVYNHEALTREFMQFVSEQTDMKVITCTEAMTGEDFGYMLQEIPGFMFWLGVNSEYGLHHAKLKPDEEAIEKAIVFLDQYVKWKGTRK</sequence>
<reference key="1">
    <citation type="journal article" date="2006" name="J. Bacteriol.">
        <title>Pathogenomic sequence analysis of Bacillus cereus and Bacillus thuringiensis isolates closely related to Bacillus anthracis.</title>
        <authorList>
            <person name="Han C.S."/>
            <person name="Xie G."/>
            <person name="Challacombe J.F."/>
            <person name="Altherr M.R."/>
            <person name="Bhotika S.S."/>
            <person name="Bruce D."/>
            <person name="Campbell C.S."/>
            <person name="Campbell M.L."/>
            <person name="Chen J."/>
            <person name="Chertkov O."/>
            <person name="Cleland C."/>
            <person name="Dimitrijevic M."/>
            <person name="Doggett N.A."/>
            <person name="Fawcett J.J."/>
            <person name="Glavina T."/>
            <person name="Goodwin L.A."/>
            <person name="Hill K.K."/>
            <person name="Hitchcock P."/>
            <person name="Jackson P.J."/>
            <person name="Keim P."/>
            <person name="Kewalramani A.R."/>
            <person name="Longmire J."/>
            <person name="Lucas S."/>
            <person name="Malfatti S."/>
            <person name="McMurry K."/>
            <person name="Meincke L.J."/>
            <person name="Misra M."/>
            <person name="Moseman B.L."/>
            <person name="Mundt M."/>
            <person name="Munk A.C."/>
            <person name="Okinaka R.T."/>
            <person name="Parson-Quintana B."/>
            <person name="Reilly L.P."/>
            <person name="Richardson P."/>
            <person name="Robinson D.L."/>
            <person name="Rubin E."/>
            <person name="Saunders E."/>
            <person name="Tapia R."/>
            <person name="Tesmer J.G."/>
            <person name="Thayer N."/>
            <person name="Thompson L.S."/>
            <person name="Tice H."/>
            <person name="Ticknor L.O."/>
            <person name="Wills P.L."/>
            <person name="Brettin T.S."/>
            <person name="Gilna P."/>
        </authorList>
    </citation>
    <scope>NUCLEOTIDE SEQUENCE [LARGE SCALE GENOMIC DNA]</scope>
    <source>
        <strain>ZK / E33L</strain>
    </source>
</reference>